<reference key="1">
    <citation type="submission" date="2006-03" db="EMBL/GenBank/DDBJ databases">
        <title>Complete sequence of Rhodopseudomonas palustris BisB5.</title>
        <authorList>
            <consortium name="US DOE Joint Genome Institute"/>
            <person name="Copeland A."/>
            <person name="Lucas S."/>
            <person name="Lapidus A."/>
            <person name="Barry K."/>
            <person name="Detter J.C."/>
            <person name="Glavina del Rio T."/>
            <person name="Hammon N."/>
            <person name="Israni S."/>
            <person name="Dalin E."/>
            <person name="Tice H."/>
            <person name="Pitluck S."/>
            <person name="Chain P."/>
            <person name="Malfatti S."/>
            <person name="Shin M."/>
            <person name="Vergez L."/>
            <person name="Schmutz J."/>
            <person name="Larimer F."/>
            <person name="Land M."/>
            <person name="Hauser L."/>
            <person name="Pelletier D.A."/>
            <person name="Kyrpides N."/>
            <person name="Lykidis A."/>
            <person name="Oda Y."/>
            <person name="Harwood C.S."/>
            <person name="Richardson P."/>
        </authorList>
    </citation>
    <scope>NUCLEOTIDE SEQUENCE [LARGE SCALE GENOMIC DNA]</scope>
    <source>
        <strain>BisB5</strain>
    </source>
</reference>
<gene>
    <name evidence="1" type="primary">ureD</name>
    <name type="ordered locus">RPD_3505</name>
</gene>
<feature type="chain" id="PRO_0000340512" description="Urease accessory protein UreD">
    <location>
        <begin position="1"/>
        <end position="283"/>
    </location>
</feature>
<comment type="function">
    <text evidence="1">Required for maturation of urease via the functional incorporation of the urease nickel metallocenter.</text>
</comment>
<comment type="subunit">
    <text evidence="1">UreD, UreF and UreG form a complex that acts as a GTP-hydrolysis-dependent molecular chaperone, activating the urease apoprotein by helping to assemble the nickel containing metallocenter of UreC. The UreE protein probably delivers the nickel.</text>
</comment>
<comment type="subcellular location">
    <subcellularLocation>
        <location evidence="1">Cytoplasm</location>
    </subcellularLocation>
</comment>
<comment type="similarity">
    <text evidence="1">Belongs to the UreD family.</text>
</comment>
<dbReference type="EMBL" id="CP000283">
    <property type="protein sequence ID" value="ABE40728.1"/>
    <property type="molecule type" value="Genomic_DNA"/>
</dbReference>
<dbReference type="SMR" id="Q133L1"/>
<dbReference type="STRING" id="316057.RPD_3505"/>
<dbReference type="KEGG" id="rpd:RPD_3505"/>
<dbReference type="eggNOG" id="COG0829">
    <property type="taxonomic scope" value="Bacteria"/>
</dbReference>
<dbReference type="HOGENOM" id="CLU_056339_2_0_5"/>
<dbReference type="BioCyc" id="RPAL316057:RPD_RS17625-MONOMER"/>
<dbReference type="Proteomes" id="UP000001818">
    <property type="component" value="Chromosome"/>
</dbReference>
<dbReference type="GO" id="GO:0005737">
    <property type="term" value="C:cytoplasm"/>
    <property type="evidence" value="ECO:0007669"/>
    <property type="project" value="UniProtKB-SubCell"/>
</dbReference>
<dbReference type="GO" id="GO:0016151">
    <property type="term" value="F:nickel cation binding"/>
    <property type="evidence" value="ECO:0007669"/>
    <property type="project" value="UniProtKB-UniRule"/>
</dbReference>
<dbReference type="HAMAP" id="MF_01384">
    <property type="entry name" value="UreD"/>
    <property type="match status" value="1"/>
</dbReference>
<dbReference type="InterPro" id="IPR002669">
    <property type="entry name" value="UreD"/>
</dbReference>
<dbReference type="PANTHER" id="PTHR33643">
    <property type="entry name" value="UREASE ACCESSORY PROTEIN D"/>
    <property type="match status" value="1"/>
</dbReference>
<dbReference type="PANTHER" id="PTHR33643:SF1">
    <property type="entry name" value="UREASE ACCESSORY PROTEIN D"/>
    <property type="match status" value="1"/>
</dbReference>
<dbReference type="Pfam" id="PF01774">
    <property type="entry name" value="UreD"/>
    <property type="match status" value="1"/>
</dbReference>
<keyword id="KW-0143">Chaperone</keyword>
<keyword id="KW-0963">Cytoplasm</keyword>
<keyword id="KW-0996">Nickel insertion</keyword>
<protein>
    <recommendedName>
        <fullName evidence="1">Urease accessory protein UreD</fullName>
    </recommendedName>
</protein>
<name>URED_RHOPS</name>
<accession>Q133L1</accession>
<sequence>MQTESSRREAAAATEQLFAANRAQGSVQFDVRAVDGVTRRGKLHESGSLRVRFPSPEQQGLSAVLVNTAGGVAGGDRFSIDIAVGESARLTLTTAAAEKIYRSHGPSAQLDITLKVADDGHLGWLPQETILFDQARVERRIDIELAPRASLLLCESVIFGRSAMGETMRHGRFIDRWRLRVGGKLVFAETVRLDGEIGALLDRPAVAKGGVAVGTALIAPGDSELVERLRENADLFGAEVGITAWNGIAMARFCAQDAARLRADMMAVLRRAAGRALPRLWLS</sequence>
<proteinExistence type="inferred from homology"/>
<organism>
    <name type="scientific">Rhodopseudomonas palustris (strain BisB5)</name>
    <dbReference type="NCBI Taxonomy" id="316057"/>
    <lineage>
        <taxon>Bacteria</taxon>
        <taxon>Pseudomonadati</taxon>
        <taxon>Pseudomonadota</taxon>
        <taxon>Alphaproteobacteria</taxon>
        <taxon>Hyphomicrobiales</taxon>
        <taxon>Nitrobacteraceae</taxon>
        <taxon>Rhodopseudomonas</taxon>
    </lineage>
</organism>
<evidence type="ECO:0000255" key="1">
    <source>
        <dbReference type="HAMAP-Rule" id="MF_01384"/>
    </source>
</evidence>